<dbReference type="EC" id="2.7.1.148" evidence="1"/>
<dbReference type="EMBL" id="CP000544">
    <property type="protein sequence ID" value="ABM61766.1"/>
    <property type="molecule type" value="Genomic_DNA"/>
</dbReference>
<dbReference type="RefSeq" id="WP_011813789.1">
    <property type="nucleotide sequence ID" value="NC_008789.1"/>
</dbReference>
<dbReference type="SMR" id="A1WVQ4"/>
<dbReference type="STRING" id="349124.Hhal_0990"/>
<dbReference type="KEGG" id="hha:Hhal_0990"/>
<dbReference type="eggNOG" id="COG1947">
    <property type="taxonomic scope" value="Bacteria"/>
</dbReference>
<dbReference type="HOGENOM" id="CLU_053057_3_0_6"/>
<dbReference type="OrthoDB" id="9809438at2"/>
<dbReference type="UniPathway" id="UPA00056">
    <property type="reaction ID" value="UER00094"/>
</dbReference>
<dbReference type="Proteomes" id="UP000000647">
    <property type="component" value="Chromosome"/>
</dbReference>
<dbReference type="GO" id="GO:0050515">
    <property type="term" value="F:4-(cytidine 5'-diphospho)-2-C-methyl-D-erythritol kinase activity"/>
    <property type="evidence" value="ECO:0007669"/>
    <property type="project" value="UniProtKB-UniRule"/>
</dbReference>
<dbReference type="GO" id="GO:0005524">
    <property type="term" value="F:ATP binding"/>
    <property type="evidence" value="ECO:0007669"/>
    <property type="project" value="UniProtKB-UniRule"/>
</dbReference>
<dbReference type="GO" id="GO:0019288">
    <property type="term" value="P:isopentenyl diphosphate biosynthetic process, methylerythritol 4-phosphate pathway"/>
    <property type="evidence" value="ECO:0007669"/>
    <property type="project" value="UniProtKB-UniRule"/>
</dbReference>
<dbReference type="GO" id="GO:0016114">
    <property type="term" value="P:terpenoid biosynthetic process"/>
    <property type="evidence" value="ECO:0007669"/>
    <property type="project" value="InterPro"/>
</dbReference>
<dbReference type="Gene3D" id="3.30.230.10">
    <property type="match status" value="1"/>
</dbReference>
<dbReference type="Gene3D" id="3.30.70.890">
    <property type="entry name" value="GHMP kinase, C-terminal domain"/>
    <property type="match status" value="1"/>
</dbReference>
<dbReference type="HAMAP" id="MF_00061">
    <property type="entry name" value="IspE"/>
    <property type="match status" value="1"/>
</dbReference>
<dbReference type="InterPro" id="IPR013750">
    <property type="entry name" value="GHMP_kinase_C_dom"/>
</dbReference>
<dbReference type="InterPro" id="IPR036554">
    <property type="entry name" value="GHMP_kinase_C_sf"/>
</dbReference>
<dbReference type="InterPro" id="IPR006204">
    <property type="entry name" value="GHMP_kinase_N_dom"/>
</dbReference>
<dbReference type="InterPro" id="IPR004424">
    <property type="entry name" value="IspE"/>
</dbReference>
<dbReference type="InterPro" id="IPR020568">
    <property type="entry name" value="Ribosomal_Su5_D2-typ_SF"/>
</dbReference>
<dbReference type="InterPro" id="IPR014721">
    <property type="entry name" value="Ribsml_uS5_D2-typ_fold_subgr"/>
</dbReference>
<dbReference type="NCBIfam" id="TIGR00154">
    <property type="entry name" value="ispE"/>
    <property type="match status" value="1"/>
</dbReference>
<dbReference type="PANTHER" id="PTHR43527">
    <property type="entry name" value="4-DIPHOSPHOCYTIDYL-2-C-METHYL-D-ERYTHRITOL KINASE, CHLOROPLASTIC"/>
    <property type="match status" value="1"/>
</dbReference>
<dbReference type="PANTHER" id="PTHR43527:SF2">
    <property type="entry name" value="4-DIPHOSPHOCYTIDYL-2-C-METHYL-D-ERYTHRITOL KINASE, CHLOROPLASTIC"/>
    <property type="match status" value="1"/>
</dbReference>
<dbReference type="Pfam" id="PF08544">
    <property type="entry name" value="GHMP_kinases_C"/>
    <property type="match status" value="1"/>
</dbReference>
<dbReference type="Pfam" id="PF00288">
    <property type="entry name" value="GHMP_kinases_N"/>
    <property type="match status" value="1"/>
</dbReference>
<dbReference type="PIRSF" id="PIRSF010376">
    <property type="entry name" value="IspE"/>
    <property type="match status" value="1"/>
</dbReference>
<dbReference type="SUPFAM" id="SSF55060">
    <property type="entry name" value="GHMP Kinase, C-terminal domain"/>
    <property type="match status" value="1"/>
</dbReference>
<dbReference type="SUPFAM" id="SSF54211">
    <property type="entry name" value="Ribosomal protein S5 domain 2-like"/>
    <property type="match status" value="1"/>
</dbReference>
<keyword id="KW-0067">ATP-binding</keyword>
<keyword id="KW-0414">Isoprene biosynthesis</keyword>
<keyword id="KW-0418">Kinase</keyword>
<keyword id="KW-0547">Nucleotide-binding</keyword>
<keyword id="KW-1185">Reference proteome</keyword>
<keyword id="KW-0808">Transferase</keyword>
<name>ISPE_HALHL</name>
<sequence length="288" mass="30390">MTEWSVWPAPAKINLFLHVLGRRADGYHELQTAFQLLGYGDRIWLRPRVDGRVERCSHLPGVAAEDDLTVRAARALQAATGSAGGVDIHVDKRLPAGGGVGGGSSDAATVLVALNHLWQTGLDEEALAGIGLALGADVPVFVRGRSAWGEGVGEQLRPMPVDPAGSRWYLVVDPGASISTAEVFGAPELTRDTSPITIPDLRAGAVRNDCEPVVRSRWPAVAEALEWLGRHGQARMSGTGSCCFVGFPGEAEAQAALERLPGAWSGFVAQAVERSPLHLTLAEAARTG</sequence>
<protein>
    <recommendedName>
        <fullName evidence="1">4-diphosphocytidyl-2-C-methyl-D-erythritol kinase</fullName>
        <shortName evidence="1">CMK</shortName>
        <ecNumber evidence="1">2.7.1.148</ecNumber>
    </recommendedName>
    <alternativeName>
        <fullName evidence="1">4-(cytidine-5'-diphospho)-2-C-methyl-D-erythritol kinase</fullName>
    </alternativeName>
</protein>
<proteinExistence type="inferred from homology"/>
<feature type="chain" id="PRO_1000007854" description="4-diphosphocytidyl-2-C-methyl-D-erythritol kinase">
    <location>
        <begin position="1"/>
        <end position="288"/>
    </location>
</feature>
<feature type="active site" evidence="1">
    <location>
        <position position="12"/>
    </location>
</feature>
<feature type="active site" evidence="1">
    <location>
        <position position="137"/>
    </location>
</feature>
<feature type="binding site" evidence="1">
    <location>
        <begin position="95"/>
        <end position="105"/>
    </location>
    <ligand>
        <name>ATP</name>
        <dbReference type="ChEBI" id="CHEBI:30616"/>
    </ligand>
</feature>
<comment type="function">
    <text evidence="1">Catalyzes the phosphorylation of the position 2 hydroxy group of 4-diphosphocytidyl-2C-methyl-D-erythritol.</text>
</comment>
<comment type="catalytic activity">
    <reaction evidence="1">
        <text>4-CDP-2-C-methyl-D-erythritol + ATP = 4-CDP-2-C-methyl-D-erythritol 2-phosphate + ADP + H(+)</text>
        <dbReference type="Rhea" id="RHEA:18437"/>
        <dbReference type="ChEBI" id="CHEBI:15378"/>
        <dbReference type="ChEBI" id="CHEBI:30616"/>
        <dbReference type="ChEBI" id="CHEBI:57823"/>
        <dbReference type="ChEBI" id="CHEBI:57919"/>
        <dbReference type="ChEBI" id="CHEBI:456216"/>
        <dbReference type="EC" id="2.7.1.148"/>
    </reaction>
</comment>
<comment type="pathway">
    <text evidence="1">Isoprenoid biosynthesis; isopentenyl diphosphate biosynthesis via DXP pathway; isopentenyl diphosphate from 1-deoxy-D-xylulose 5-phosphate: step 3/6.</text>
</comment>
<comment type="similarity">
    <text evidence="1">Belongs to the GHMP kinase family. IspE subfamily.</text>
</comment>
<evidence type="ECO:0000255" key="1">
    <source>
        <dbReference type="HAMAP-Rule" id="MF_00061"/>
    </source>
</evidence>
<organism>
    <name type="scientific">Halorhodospira halophila (strain DSM 244 / SL1)</name>
    <name type="common">Ectothiorhodospira halophila (strain DSM 244 / SL1)</name>
    <dbReference type="NCBI Taxonomy" id="349124"/>
    <lineage>
        <taxon>Bacteria</taxon>
        <taxon>Pseudomonadati</taxon>
        <taxon>Pseudomonadota</taxon>
        <taxon>Gammaproteobacteria</taxon>
        <taxon>Chromatiales</taxon>
        <taxon>Ectothiorhodospiraceae</taxon>
        <taxon>Halorhodospira</taxon>
    </lineage>
</organism>
<gene>
    <name evidence="1" type="primary">ispE</name>
    <name type="ordered locus">Hhal_0990</name>
</gene>
<accession>A1WVQ4</accession>
<reference key="1">
    <citation type="submission" date="2006-12" db="EMBL/GenBank/DDBJ databases">
        <title>Complete sequence of Halorhodospira halophila SL1.</title>
        <authorList>
            <consortium name="US DOE Joint Genome Institute"/>
            <person name="Copeland A."/>
            <person name="Lucas S."/>
            <person name="Lapidus A."/>
            <person name="Barry K."/>
            <person name="Detter J.C."/>
            <person name="Glavina del Rio T."/>
            <person name="Hammon N."/>
            <person name="Israni S."/>
            <person name="Dalin E."/>
            <person name="Tice H."/>
            <person name="Pitluck S."/>
            <person name="Saunders E."/>
            <person name="Brettin T."/>
            <person name="Bruce D."/>
            <person name="Han C."/>
            <person name="Tapia R."/>
            <person name="Schmutz J."/>
            <person name="Larimer F."/>
            <person name="Land M."/>
            <person name="Hauser L."/>
            <person name="Kyrpides N."/>
            <person name="Mikhailova N."/>
            <person name="Hoff W."/>
            <person name="Richardson P."/>
        </authorList>
    </citation>
    <scope>NUCLEOTIDE SEQUENCE [LARGE SCALE GENOMIC DNA]</scope>
    <source>
        <strain>DSM 244 / SL1</strain>
    </source>
</reference>